<organism>
    <name type="scientific">Mycobacterium sp. (strain JLS)</name>
    <dbReference type="NCBI Taxonomy" id="164757"/>
    <lineage>
        <taxon>Bacteria</taxon>
        <taxon>Bacillati</taxon>
        <taxon>Actinomycetota</taxon>
        <taxon>Actinomycetes</taxon>
        <taxon>Mycobacteriales</taxon>
        <taxon>Mycobacteriaceae</taxon>
        <taxon>Mycobacterium</taxon>
    </lineage>
</organism>
<dbReference type="EC" id="4.99.1.9" evidence="1"/>
<dbReference type="EMBL" id="CP000580">
    <property type="protein sequence ID" value="ABN98279.1"/>
    <property type="molecule type" value="Genomic_DNA"/>
</dbReference>
<dbReference type="SMR" id="A3PZF2"/>
<dbReference type="KEGG" id="mjl:Mjls_2495"/>
<dbReference type="HOGENOM" id="CLU_018884_2_0_11"/>
<dbReference type="BioCyc" id="MSP164757:G1G8C-2514-MONOMER"/>
<dbReference type="UniPathway" id="UPA00252"/>
<dbReference type="GO" id="GO:0005737">
    <property type="term" value="C:cytoplasm"/>
    <property type="evidence" value="ECO:0007669"/>
    <property type="project" value="UniProtKB-SubCell"/>
</dbReference>
<dbReference type="GO" id="GO:0004325">
    <property type="term" value="F:ferrochelatase activity"/>
    <property type="evidence" value="ECO:0007669"/>
    <property type="project" value="UniProtKB-UniRule"/>
</dbReference>
<dbReference type="GO" id="GO:0046872">
    <property type="term" value="F:metal ion binding"/>
    <property type="evidence" value="ECO:0007669"/>
    <property type="project" value="UniProtKB-KW"/>
</dbReference>
<dbReference type="GO" id="GO:0006783">
    <property type="term" value="P:heme biosynthetic process"/>
    <property type="evidence" value="ECO:0007669"/>
    <property type="project" value="UniProtKB-UniRule"/>
</dbReference>
<dbReference type="CDD" id="cd00419">
    <property type="entry name" value="Ferrochelatase_C"/>
    <property type="match status" value="1"/>
</dbReference>
<dbReference type="CDD" id="cd03411">
    <property type="entry name" value="Ferrochelatase_N"/>
    <property type="match status" value="1"/>
</dbReference>
<dbReference type="Gene3D" id="3.40.50.1400">
    <property type="match status" value="2"/>
</dbReference>
<dbReference type="HAMAP" id="MF_00323">
    <property type="entry name" value="Ferrochelatase"/>
    <property type="match status" value="1"/>
</dbReference>
<dbReference type="InterPro" id="IPR001015">
    <property type="entry name" value="Ferrochelatase"/>
</dbReference>
<dbReference type="InterPro" id="IPR019772">
    <property type="entry name" value="Ferrochelatase_AS"/>
</dbReference>
<dbReference type="InterPro" id="IPR033644">
    <property type="entry name" value="Ferrochelatase_C"/>
</dbReference>
<dbReference type="InterPro" id="IPR033659">
    <property type="entry name" value="Ferrochelatase_N"/>
</dbReference>
<dbReference type="NCBIfam" id="TIGR00109">
    <property type="entry name" value="hemH"/>
    <property type="match status" value="1"/>
</dbReference>
<dbReference type="NCBIfam" id="NF000689">
    <property type="entry name" value="PRK00035.2-1"/>
    <property type="match status" value="1"/>
</dbReference>
<dbReference type="PANTHER" id="PTHR11108">
    <property type="entry name" value="FERROCHELATASE"/>
    <property type="match status" value="1"/>
</dbReference>
<dbReference type="PANTHER" id="PTHR11108:SF1">
    <property type="entry name" value="FERROCHELATASE, MITOCHONDRIAL"/>
    <property type="match status" value="1"/>
</dbReference>
<dbReference type="Pfam" id="PF00762">
    <property type="entry name" value="Ferrochelatase"/>
    <property type="match status" value="1"/>
</dbReference>
<dbReference type="SUPFAM" id="SSF53800">
    <property type="entry name" value="Chelatase"/>
    <property type="match status" value="1"/>
</dbReference>
<dbReference type="PROSITE" id="PS00534">
    <property type="entry name" value="FERROCHELATASE"/>
    <property type="match status" value="1"/>
</dbReference>
<keyword id="KW-0963">Cytoplasm</keyword>
<keyword id="KW-0350">Heme biosynthesis</keyword>
<keyword id="KW-0408">Iron</keyword>
<keyword id="KW-0456">Lyase</keyword>
<keyword id="KW-0479">Metal-binding</keyword>
<keyword id="KW-0627">Porphyrin biosynthesis</keyword>
<feature type="chain" id="PRO_1000019322" description="Coproporphyrin III ferrochelatase">
    <location>
        <begin position="1"/>
        <end position="346"/>
    </location>
</feature>
<feature type="binding site" evidence="1">
    <location>
        <position position="52"/>
    </location>
    <ligand>
        <name>Fe-coproporphyrin III</name>
        <dbReference type="ChEBI" id="CHEBI:68438"/>
    </ligand>
</feature>
<feature type="binding site" evidence="1">
    <location>
        <position position="121"/>
    </location>
    <ligand>
        <name>Fe-coproporphyrin III</name>
        <dbReference type="ChEBI" id="CHEBI:68438"/>
    </ligand>
</feature>
<feature type="binding site" evidence="1">
    <location>
        <position position="181"/>
    </location>
    <ligand>
        <name>Fe(2+)</name>
        <dbReference type="ChEBI" id="CHEBI:29033"/>
    </ligand>
</feature>
<feature type="binding site" evidence="1">
    <location>
        <position position="264"/>
    </location>
    <ligand>
        <name>Fe(2+)</name>
        <dbReference type="ChEBI" id="CHEBI:29033"/>
    </ligand>
</feature>
<name>CPFC_MYCSJ</name>
<comment type="function">
    <text evidence="1">Involved in coproporphyrin-dependent heme b biosynthesis. Catalyzes the insertion of ferrous iron into coproporphyrin III to form Fe-coproporphyrin III.</text>
</comment>
<comment type="catalytic activity">
    <reaction evidence="1">
        <text>Fe-coproporphyrin III + 2 H(+) = coproporphyrin III + Fe(2+)</text>
        <dbReference type="Rhea" id="RHEA:49572"/>
        <dbReference type="ChEBI" id="CHEBI:15378"/>
        <dbReference type="ChEBI" id="CHEBI:29033"/>
        <dbReference type="ChEBI" id="CHEBI:68438"/>
        <dbReference type="ChEBI" id="CHEBI:131725"/>
        <dbReference type="EC" id="4.99.1.9"/>
    </reaction>
    <physiologicalReaction direction="right-to-left" evidence="1">
        <dbReference type="Rhea" id="RHEA:49574"/>
    </physiologicalReaction>
</comment>
<comment type="pathway">
    <text evidence="1">Porphyrin-containing compound metabolism; protoheme biosynthesis.</text>
</comment>
<comment type="subcellular location">
    <subcellularLocation>
        <location evidence="1">Cytoplasm</location>
    </subcellularLocation>
</comment>
<comment type="similarity">
    <text evidence="1">Belongs to the ferrochelatase family.</text>
</comment>
<sequence length="346" mass="37507">MLFDALLVLSFGGPEGPDQVMPFLENVTRGRGIPRERLASVAEHYLHFGGVSPINGINRALIGEIEAELGARGETLPVYFGNRNWDPYVEDAVTAMRDDGVRRAAVFATSAWGGYSSCTQYNEDIARGRAAAGDSAPQLVKLRHYFDHPLLVEMFAESIGVAAQSLPADLRDEARLLFTAHSIPVAADDRHGPNLYSRQVAYATRLVAAAAGYSEFDQVWQSRSGPPRIPWLEPDIGDHVAALAERGTKAVIICPIGFVADHIEVVWDLDSEVREQAADLGIAMARARTPNADRRYARLALDLVDELRGDRDPLRVAGVDPAPGCGYSVDGTTCADSPRCVARITG</sequence>
<reference key="1">
    <citation type="submission" date="2007-02" db="EMBL/GenBank/DDBJ databases">
        <title>Complete sequence of Mycobacterium sp. JLS.</title>
        <authorList>
            <consortium name="US DOE Joint Genome Institute"/>
            <person name="Copeland A."/>
            <person name="Lucas S."/>
            <person name="Lapidus A."/>
            <person name="Barry K."/>
            <person name="Detter J.C."/>
            <person name="Glavina del Rio T."/>
            <person name="Hammon N."/>
            <person name="Israni S."/>
            <person name="Dalin E."/>
            <person name="Tice H."/>
            <person name="Pitluck S."/>
            <person name="Chain P."/>
            <person name="Malfatti S."/>
            <person name="Shin M."/>
            <person name="Vergez L."/>
            <person name="Schmutz J."/>
            <person name="Larimer F."/>
            <person name="Land M."/>
            <person name="Hauser L."/>
            <person name="Kyrpides N."/>
            <person name="Mikhailova N."/>
            <person name="Miller C.D."/>
            <person name="Anderson A.J."/>
            <person name="Sims R.C."/>
            <person name="Richardson P."/>
        </authorList>
    </citation>
    <scope>NUCLEOTIDE SEQUENCE [LARGE SCALE GENOMIC DNA]</scope>
    <source>
        <strain>JLS</strain>
    </source>
</reference>
<protein>
    <recommendedName>
        <fullName evidence="1">Coproporphyrin III ferrochelatase</fullName>
        <ecNumber evidence="1">4.99.1.9</ecNumber>
    </recommendedName>
</protein>
<gene>
    <name evidence="1" type="primary">cpfC</name>
    <name type="ordered locus">Mjls_2495</name>
</gene>
<proteinExistence type="inferred from homology"/>
<evidence type="ECO:0000255" key="1">
    <source>
        <dbReference type="HAMAP-Rule" id="MF_00323"/>
    </source>
</evidence>
<accession>A3PZF2</accession>